<comment type="alternative products">
    <event type="alternative splicing"/>
    <isoform>
        <id>Q9GZU0-1</id>
        <name>1</name>
        <sequence type="displayed"/>
    </isoform>
    <isoform>
        <id>Q9GZU0-2</id>
        <name>2</name>
        <sequence type="described" ref="VSP_015616 VSP_015617"/>
    </isoform>
</comment>
<evidence type="ECO:0000305" key="1"/>
<reference key="1">
    <citation type="submission" date="2004-04" db="EMBL/GenBank/DDBJ databases">
        <title>Screening and cloning of the target genes transactivated by hepatitis B virus X protein by microarray assay.</title>
        <authorList>
            <person name="Gong M."/>
            <person name="Cheng J."/>
            <person name="Ji D."/>
            <person name="Liu Y."/>
            <person name="Guo J."/>
        </authorList>
    </citation>
    <scope>NUCLEOTIDE SEQUENCE [MRNA] (ISOFORM 1)</scope>
</reference>
<reference key="2">
    <citation type="journal article" date="2001" name="Genome Res.">
        <title>Towards a catalog of human genes and proteins: sequencing and analysis of 500 novel complete protein coding human cDNAs.</title>
        <authorList>
            <person name="Wiemann S."/>
            <person name="Weil B."/>
            <person name="Wellenreuther R."/>
            <person name="Gassenhuber J."/>
            <person name="Glassl S."/>
            <person name="Ansorge W."/>
            <person name="Boecher M."/>
            <person name="Bloecker H."/>
            <person name="Bauersachs S."/>
            <person name="Blum H."/>
            <person name="Lauber J."/>
            <person name="Duesterhoeft A."/>
            <person name="Beyer A."/>
            <person name="Koehrer K."/>
            <person name="Strack N."/>
            <person name="Mewes H.-W."/>
            <person name="Ottenwaelder B."/>
            <person name="Obermaier B."/>
            <person name="Tampe J."/>
            <person name="Heubner D."/>
            <person name="Wambutt R."/>
            <person name="Korn B."/>
            <person name="Klein M."/>
            <person name="Poustka A."/>
        </authorList>
    </citation>
    <scope>NUCLEOTIDE SEQUENCE [LARGE SCALE MRNA] (ISOFORM 1)</scope>
    <source>
        <tissue>Brain</tissue>
    </source>
</reference>
<reference key="3">
    <citation type="journal article" date="2003" name="Cancer Lett.">
        <title>Neuroblastoma oligo-capping cDNA project: toward the understanding of the genesis and biology of neuroblastoma.</title>
        <authorList>
            <person name="Ohira M."/>
            <person name="Morohashi A."/>
            <person name="Nakamura Y."/>
            <person name="Isogai E."/>
            <person name="Furuya K."/>
            <person name="Hamano S."/>
            <person name="Machida T."/>
            <person name="Aoyama M."/>
            <person name="Fukumura M."/>
            <person name="Miyazaki K."/>
            <person name="Suzuki Y."/>
            <person name="Sugano S."/>
            <person name="Hirato J."/>
            <person name="Nakagawara A."/>
        </authorList>
    </citation>
    <scope>NUCLEOTIDE SEQUENCE [LARGE SCALE MRNA] (ISOFORM 1)</scope>
    <source>
        <tissue>Neuroblastoma</tissue>
    </source>
</reference>
<reference key="4">
    <citation type="journal article" date="2004" name="Nat. Genet.">
        <title>Complete sequencing and characterization of 21,243 full-length human cDNAs.</title>
        <authorList>
            <person name="Ota T."/>
            <person name="Suzuki Y."/>
            <person name="Nishikawa T."/>
            <person name="Otsuki T."/>
            <person name="Sugiyama T."/>
            <person name="Irie R."/>
            <person name="Wakamatsu A."/>
            <person name="Hayashi K."/>
            <person name="Sato H."/>
            <person name="Nagai K."/>
            <person name="Kimura K."/>
            <person name="Makita H."/>
            <person name="Sekine M."/>
            <person name="Obayashi M."/>
            <person name="Nishi T."/>
            <person name="Shibahara T."/>
            <person name="Tanaka T."/>
            <person name="Ishii S."/>
            <person name="Yamamoto J."/>
            <person name="Saito K."/>
            <person name="Kawai Y."/>
            <person name="Isono Y."/>
            <person name="Nakamura Y."/>
            <person name="Nagahari K."/>
            <person name="Murakami K."/>
            <person name="Yasuda T."/>
            <person name="Iwayanagi T."/>
            <person name="Wagatsuma M."/>
            <person name="Shiratori A."/>
            <person name="Sudo H."/>
            <person name="Hosoiri T."/>
            <person name="Kaku Y."/>
            <person name="Kodaira H."/>
            <person name="Kondo H."/>
            <person name="Sugawara M."/>
            <person name="Takahashi M."/>
            <person name="Kanda K."/>
            <person name="Yokoi T."/>
            <person name="Furuya T."/>
            <person name="Kikkawa E."/>
            <person name="Omura Y."/>
            <person name="Abe K."/>
            <person name="Kamihara K."/>
            <person name="Katsuta N."/>
            <person name="Sato K."/>
            <person name="Tanikawa M."/>
            <person name="Yamazaki M."/>
            <person name="Ninomiya K."/>
            <person name="Ishibashi T."/>
            <person name="Yamashita H."/>
            <person name="Murakawa K."/>
            <person name="Fujimori K."/>
            <person name="Tanai H."/>
            <person name="Kimata M."/>
            <person name="Watanabe M."/>
            <person name="Hiraoka S."/>
            <person name="Chiba Y."/>
            <person name="Ishida S."/>
            <person name="Ono Y."/>
            <person name="Takiguchi S."/>
            <person name="Watanabe S."/>
            <person name="Yosida M."/>
            <person name="Hotuta T."/>
            <person name="Kusano J."/>
            <person name="Kanehori K."/>
            <person name="Takahashi-Fujii A."/>
            <person name="Hara H."/>
            <person name="Tanase T.-O."/>
            <person name="Nomura Y."/>
            <person name="Togiya S."/>
            <person name="Komai F."/>
            <person name="Hara R."/>
            <person name="Takeuchi K."/>
            <person name="Arita M."/>
            <person name="Imose N."/>
            <person name="Musashino K."/>
            <person name="Yuuki H."/>
            <person name="Oshima A."/>
            <person name="Sasaki N."/>
            <person name="Aotsuka S."/>
            <person name="Yoshikawa Y."/>
            <person name="Matsunawa H."/>
            <person name="Ichihara T."/>
            <person name="Shiohata N."/>
            <person name="Sano S."/>
            <person name="Moriya S."/>
            <person name="Momiyama H."/>
            <person name="Satoh N."/>
            <person name="Takami S."/>
            <person name="Terashima Y."/>
            <person name="Suzuki O."/>
            <person name="Nakagawa S."/>
            <person name="Senoh A."/>
            <person name="Mizoguchi H."/>
            <person name="Goto Y."/>
            <person name="Shimizu F."/>
            <person name="Wakebe H."/>
            <person name="Hishigaki H."/>
            <person name="Watanabe T."/>
            <person name="Sugiyama A."/>
            <person name="Takemoto M."/>
            <person name="Kawakami B."/>
            <person name="Yamazaki M."/>
            <person name="Watanabe K."/>
            <person name="Kumagai A."/>
            <person name="Itakura S."/>
            <person name="Fukuzumi Y."/>
            <person name="Fujimori Y."/>
            <person name="Komiyama M."/>
            <person name="Tashiro H."/>
            <person name="Tanigami A."/>
            <person name="Fujiwara T."/>
            <person name="Ono T."/>
            <person name="Yamada K."/>
            <person name="Fujii Y."/>
            <person name="Ozaki K."/>
            <person name="Hirao M."/>
            <person name="Ohmori Y."/>
            <person name="Kawabata A."/>
            <person name="Hikiji T."/>
            <person name="Kobatake N."/>
            <person name="Inagaki H."/>
            <person name="Ikema Y."/>
            <person name="Okamoto S."/>
            <person name="Okitani R."/>
            <person name="Kawakami T."/>
            <person name="Noguchi S."/>
            <person name="Itoh T."/>
            <person name="Shigeta K."/>
            <person name="Senba T."/>
            <person name="Matsumura K."/>
            <person name="Nakajima Y."/>
            <person name="Mizuno T."/>
            <person name="Morinaga M."/>
            <person name="Sasaki M."/>
            <person name="Togashi T."/>
            <person name="Oyama M."/>
            <person name="Hata H."/>
            <person name="Watanabe M."/>
            <person name="Komatsu T."/>
            <person name="Mizushima-Sugano J."/>
            <person name="Satoh T."/>
            <person name="Shirai Y."/>
            <person name="Takahashi Y."/>
            <person name="Nakagawa K."/>
            <person name="Okumura K."/>
            <person name="Nagase T."/>
            <person name="Nomura N."/>
            <person name="Kikuchi H."/>
            <person name="Masuho Y."/>
            <person name="Yamashita R."/>
            <person name="Nakai K."/>
            <person name="Yada T."/>
            <person name="Nakamura Y."/>
            <person name="Ohara O."/>
            <person name="Isogai T."/>
            <person name="Sugano S."/>
        </authorList>
    </citation>
    <scope>NUCLEOTIDE SEQUENCE [LARGE SCALE MRNA] (ISOFORM 1)</scope>
</reference>
<reference key="5">
    <citation type="submission" date="2004-06" db="EMBL/GenBank/DDBJ databases">
        <title>Cloning of human full open reading frames in Gateway(TM) system entry vector (pDONR201).</title>
        <authorList>
            <person name="Ebert L."/>
            <person name="Schick M."/>
            <person name="Neubert P."/>
            <person name="Schatten R."/>
            <person name="Henze S."/>
            <person name="Korn B."/>
        </authorList>
    </citation>
    <scope>NUCLEOTIDE SEQUENCE [LARGE SCALE MRNA] (ISOFORM 1)</scope>
</reference>
<reference key="6">
    <citation type="journal article" date="2003" name="Nature">
        <title>The DNA sequence and analysis of human chromosome 6.</title>
        <authorList>
            <person name="Mungall A.J."/>
            <person name="Palmer S.A."/>
            <person name="Sims S.K."/>
            <person name="Edwards C.A."/>
            <person name="Ashurst J.L."/>
            <person name="Wilming L."/>
            <person name="Jones M.C."/>
            <person name="Horton R."/>
            <person name="Hunt S.E."/>
            <person name="Scott C.E."/>
            <person name="Gilbert J.G.R."/>
            <person name="Clamp M.E."/>
            <person name="Bethel G."/>
            <person name="Milne S."/>
            <person name="Ainscough R."/>
            <person name="Almeida J.P."/>
            <person name="Ambrose K.D."/>
            <person name="Andrews T.D."/>
            <person name="Ashwell R.I.S."/>
            <person name="Babbage A.K."/>
            <person name="Bagguley C.L."/>
            <person name="Bailey J."/>
            <person name="Banerjee R."/>
            <person name="Barker D.J."/>
            <person name="Barlow K.F."/>
            <person name="Bates K."/>
            <person name="Beare D.M."/>
            <person name="Beasley H."/>
            <person name="Beasley O."/>
            <person name="Bird C.P."/>
            <person name="Blakey S.E."/>
            <person name="Bray-Allen S."/>
            <person name="Brook J."/>
            <person name="Brown A.J."/>
            <person name="Brown J.Y."/>
            <person name="Burford D.C."/>
            <person name="Burrill W."/>
            <person name="Burton J."/>
            <person name="Carder C."/>
            <person name="Carter N.P."/>
            <person name="Chapman J.C."/>
            <person name="Clark S.Y."/>
            <person name="Clark G."/>
            <person name="Clee C.M."/>
            <person name="Clegg S."/>
            <person name="Cobley V."/>
            <person name="Collier R.E."/>
            <person name="Collins J.E."/>
            <person name="Colman L.K."/>
            <person name="Corby N.R."/>
            <person name="Coville G.J."/>
            <person name="Culley K.M."/>
            <person name="Dhami P."/>
            <person name="Davies J."/>
            <person name="Dunn M."/>
            <person name="Earthrowl M.E."/>
            <person name="Ellington A.E."/>
            <person name="Evans K.A."/>
            <person name="Faulkner L."/>
            <person name="Francis M.D."/>
            <person name="Frankish A."/>
            <person name="Frankland J."/>
            <person name="French L."/>
            <person name="Garner P."/>
            <person name="Garnett J."/>
            <person name="Ghori M.J."/>
            <person name="Gilby L.M."/>
            <person name="Gillson C.J."/>
            <person name="Glithero R.J."/>
            <person name="Grafham D.V."/>
            <person name="Grant M."/>
            <person name="Gribble S."/>
            <person name="Griffiths C."/>
            <person name="Griffiths M.N.D."/>
            <person name="Hall R."/>
            <person name="Halls K.S."/>
            <person name="Hammond S."/>
            <person name="Harley J.L."/>
            <person name="Hart E.A."/>
            <person name="Heath P.D."/>
            <person name="Heathcott R."/>
            <person name="Holmes S.J."/>
            <person name="Howden P.J."/>
            <person name="Howe K.L."/>
            <person name="Howell G.R."/>
            <person name="Huckle E."/>
            <person name="Humphray S.J."/>
            <person name="Humphries M.D."/>
            <person name="Hunt A.R."/>
            <person name="Johnson C.M."/>
            <person name="Joy A.A."/>
            <person name="Kay M."/>
            <person name="Keenan S.J."/>
            <person name="Kimberley A.M."/>
            <person name="King A."/>
            <person name="Laird G.K."/>
            <person name="Langford C."/>
            <person name="Lawlor S."/>
            <person name="Leongamornlert D.A."/>
            <person name="Leversha M."/>
            <person name="Lloyd C.R."/>
            <person name="Lloyd D.M."/>
            <person name="Loveland J.E."/>
            <person name="Lovell J."/>
            <person name="Martin S."/>
            <person name="Mashreghi-Mohammadi M."/>
            <person name="Maslen G.L."/>
            <person name="Matthews L."/>
            <person name="McCann O.T."/>
            <person name="McLaren S.J."/>
            <person name="McLay K."/>
            <person name="McMurray A."/>
            <person name="Moore M.J.F."/>
            <person name="Mullikin J.C."/>
            <person name="Niblett D."/>
            <person name="Nickerson T."/>
            <person name="Novik K.L."/>
            <person name="Oliver K."/>
            <person name="Overton-Larty E.K."/>
            <person name="Parker A."/>
            <person name="Patel R."/>
            <person name="Pearce A.V."/>
            <person name="Peck A.I."/>
            <person name="Phillimore B.J.C.T."/>
            <person name="Phillips S."/>
            <person name="Plumb R.W."/>
            <person name="Porter K.M."/>
            <person name="Ramsey Y."/>
            <person name="Ranby S.A."/>
            <person name="Rice C.M."/>
            <person name="Ross M.T."/>
            <person name="Searle S.M."/>
            <person name="Sehra H.K."/>
            <person name="Sheridan E."/>
            <person name="Skuce C.D."/>
            <person name="Smith S."/>
            <person name="Smith M."/>
            <person name="Spraggon L."/>
            <person name="Squares S.L."/>
            <person name="Steward C.A."/>
            <person name="Sycamore N."/>
            <person name="Tamlyn-Hall G."/>
            <person name="Tester J."/>
            <person name="Theaker A.J."/>
            <person name="Thomas D.W."/>
            <person name="Thorpe A."/>
            <person name="Tracey A."/>
            <person name="Tromans A."/>
            <person name="Tubby B."/>
            <person name="Wall M."/>
            <person name="Wallis J.M."/>
            <person name="West A.P."/>
            <person name="White S.S."/>
            <person name="Whitehead S.L."/>
            <person name="Whittaker H."/>
            <person name="Wild A."/>
            <person name="Willey D.J."/>
            <person name="Wilmer T.E."/>
            <person name="Wood J.M."/>
            <person name="Wray P.W."/>
            <person name="Wyatt J.C."/>
            <person name="Young L."/>
            <person name="Younger R.M."/>
            <person name="Bentley D.R."/>
            <person name="Coulson A."/>
            <person name="Durbin R.M."/>
            <person name="Hubbard T."/>
            <person name="Sulston J.E."/>
            <person name="Dunham I."/>
            <person name="Rogers J."/>
            <person name="Beck S."/>
        </authorList>
    </citation>
    <scope>NUCLEOTIDE SEQUENCE [LARGE SCALE GENOMIC DNA]</scope>
</reference>
<reference key="7">
    <citation type="submission" date="2005-07" db="EMBL/GenBank/DDBJ databases">
        <authorList>
            <person name="Mural R.J."/>
            <person name="Istrail S."/>
            <person name="Sutton G.G."/>
            <person name="Florea L."/>
            <person name="Halpern A.L."/>
            <person name="Mobarry C.M."/>
            <person name="Lippert R."/>
            <person name="Walenz B."/>
            <person name="Shatkay H."/>
            <person name="Dew I."/>
            <person name="Miller J.R."/>
            <person name="Flanigan M.J."/>
            <person name="Edwards N.J."/>
            <person name="Bolanos R."/>
            <person name="Fasulo D."/>
            <person name="Halldorsson B.V."/>
            <person name="Hannenhalli S."/>
            <person name="Turner R."/>
            <person name="Yooseph S."/>
            <person name="Lu F."/>
            <person name="Nusskern D.R."/>
            <person name="Shue B.C."/>
            <person name="Zheng X.H."/>
            <person name="Zhong F."/>
            <person name="Delcher A.L."/>
            <person name="Huson D.H."/>
            <person name="Kravitz S.A."/>
            <person name="Mouchard L."/>
            <person name="Reinert K."/>
            <person name="Remington K.A."/>
            <person name="Clark A.G."/>
            <person name="Waterman M.S."/>
            <person name="Eichler E.E."/>
            <person name="Adams M.D."/>
            <person name="Hunkapiller M.W."/>
            <person name="Myers E.W."/>
            <person name="Venter J.C."/>
        </authorList>
    </citation>
    <scope>NUCLEOTIDE SEQUENCE [LARGE SCALE GENOMIC DNA]</scope>
</reference>
<reference key="8">
    <citation type="journal article" date="2004" name="Genome Res.">
        <title>The status, quality, and expansion of the NIH full-length cDNA project: the Mammalian Gene Collection (MGC).</title>
        <authorList>
            <consortium name="The MGC Project Team"/>
        </authorList>
    </citation>
    <scope>NUCLEOTIDE SEQUENCE [LARGE SCALE MRNA] (ISOFORM 1)</scope>
    <source>
        <tissue>Uterus</tissue>
    </source>
</reference>
<proteinExistence type="evidence at protein level"/>
<protein>
    <recommendedName>
        <fullName>Uncharacterized protein C6orf62</fullName>
    </recommendedName>
    <alternativeName>
        <fullName>HBV X-transactivated gene 12 protein</fullName>
    </alternativeName>
    <alternativeName>
        <fullName>HBV XAg-transactivated protein 12</fullName>
    </alternativeName>
</protein>
<name>CF062_HUMAN</name>
<gene>
    <name type="primary">C6orf62</name>
    <name type="synonym">XTP12</name>
    <name type="ORF">Nbla00237</name>
</gene>
<feature type="chain" id="PRO_0000089514" description="Uncharacterized protein C6orf62">
    <location>
        <begin position="1"/>
        <end position="229"/>
    </location>
</feature>
<feature type="splice variant" id="VSP_015616" description="In isoform 2." evidence="1">
    <location>
        <begin position="1"/>
        <end position="29"/>
    </location>
</feature>
<feature type="splice variant" id="VSP_015617" description="In isoform 2." evidence="1">
    <original>FDFKMYIAFVFKEK</original>
    <variation>MSENLSDPVSPVVR</variation>
    <location>
        <begin position="30"/>
        <end position="43"/>
    </location>
</feature>
<feature type="sequence variant" id="VAR_050803" description="In dbSNP:rs34238213.">
    <original>W</original>
    <variation>C</variation>
    <location>
        <position position="116"/>
    </location>
</feature>
<feature type="sequence variant" id="VAR_050804" description="In dbSNP:rs35050510.">
    <original>R</original>
    <variation>S</variation>
    <location>
        <position position="140"/>
    </location>
</feature>
<feature type="sequence conflict" description="In Ref. 5; CAG33573." evidence="1" ref="5">
    <original>E</original>
    <variation>D</variation>
    <location>
        <position position="229"/>
    </location>
</feature>
<dbReference type="EMBL" id="AY598792">
    <property type="protein sequence ID" value="AAT09203.1"/>
    <property type="molecule type" value="mRNA"/>
</dbReference>
<dbReference type="EMBL" id="AL136632">
    <property type="protein sequence ID" value="CAB66567.1"/>
    <property type="molecule type" value="mRNA"/>
</dbReference>
<dbReference type="EMBL" id="AB075502">
    <property type="protein sequence ID" value="BAE45752.1"/>
    <property type="molecule type" value="mRNA"/>
</dbReference>
<dbReference type="EMBL" id="AK022681">
    <property type="protein sequence ID" value="BAB14175.1"/>
    <property type="molecule type" value="mRNA"/>
</dbReference>
<dbReference type="EMBL" id="CR533486">
    <property type="protein sequence ID" value="CAG38517.1"/>
    <property type="molecule type" value="mRNA"/>
</dbReference>
<dbReference type="EMBL" id="CR457292">
    <property type="protein sequence ID" value="CAG33573.1"/>
    <property type="molecule type" value="mRNA"/>
</dbReference>
<dbReference type="EMBL" id="AL031775">
    <property type="status" value="NOT_ANNOTATED_CDS"/>
    <property type="molecule type" value="Genomic_DNA"/>
</dbReference>
<dbReference type="EMBL" id="AL133264">
    <property type="status" value="NOT_ANNOTATED_CDS"/>
    <property type="molecule type" value="Genomic_DNA"/>
</dbReference>
<dbReference type="EMBL" id="CH471087">
    <property type="protein sequence ID" value="EAW55461.1"/>
    <property type="molecule type" value="Genomic_DNA"/>
</dbReference>
<dbReference type="EMBL" id="BC047866">
    <property type="protein sequence ID" value="AAH47866.1"/>
    <property type="molecule type" value="mRNA"/>
</dbReference>
<dbReference type="CCDS" id="CCDS4559.1">
    <molecule id="Q9GZU0-1"/>
</dbReference>
<dbReference type="CCDS" id="CCDS93869.1">
    <molecule id="Q9GZU0-2"/>
</dbReference>
<dbReference type="RefSeq" id="NP_001397764.1">
    <molecule id="Q9GZU0-2"/>
    <property type="nucleotide sequence ID" value="NM_001410835.1"/>
</dbReference>
<dbReference type="RefSeq" id="NP_112201.1">
    <molecule id="Q9GZU0-1"/>
    <property type="nucleotide sequence ID" value="NM_030939.5"/>
</dbReference>
<dbReference type="RefSeq" id="XP_011513230.1">
    <property type="nucleotide sequence ID" value="XM_011514928.2"/>
</dbReference>
<dbReference type="BioGRID" id="123568">
    <property type="interactions" value="18"/>
</dbReference>
<dbReference type="FunCoup" id="Q9GZU0">
    <property type="interactions" value="2114"/>
</dbReference>
<dbReference type="IntAct" id="Q9GZU0">
    <property type="interactions" value="17"/>
</dbReference>
<dbReference type="STRING" id="9606.ENSP00000367359"/>
<dbReference type="iPTMnet" id="Q9GZU0"/>
<dbReference type="PhosphoSitePlus" id="Q9GZU0"/>
<dbReference type="BioMuta" id="C6orf62"/>
<dbReference type="DMDM" id="30912736"/>
<dbReference type="jPOST" id="Q9GZU0"/>
<dbReference type="MassIVE" id="Q9GZU0"/>
<dbReference type="PaxDb" id="9606-ENSP00000367359"/>
<dbReference type="PeptideAtlas" id="Q9GZU0"/>
<dbReference type="ProteomicsDB" id="80141">
    <molecule id="Q9GZU0-1"/>
</dbReference>
<dbReference type="ProteomicsDB" id="80142">
    <molecule id="Q9GZU0-2"/>
</dbReference>
<dbReference type="Pumba" id="Q9GZU0"/>
<dbReference type="Antibodypedia" id="25335">
    <property type="antibodies" value="124 antibodies from 15 providers"/>
</dbReference>
<dbReference type="DNASU" id="81688"/>
<dbReference type="Ensembl" id="ENST00000378102.3">
    <molecule id="Q9GZU0-2"/>
    <property type="protein sequence ID" value="ENSP00000367342.3"/>
    <property type="gene ID" value="ENSG00000112308.14"/>
</dbReference>
<dbReference type="Ensembl" id="ENST00000378119.9">
    <molecule id="Q9GZU0-1"/>
    <property type="protein sequence ID" value="ENSP00000367359.4"/>
    <property type="gene ID" value="ENSG00000112308.14"/>
</dbReference>
<dbReference type="Ensembl" id="ENST00000710317.1">
    <molecule id="Q9GZU0-1"/>
    <property type="protein sequence ID" value="ENSP00000518198.1"/>
    <property type="gene ID" value="ENSG00000112308.14"/>
</dbReference>
<dbReference type="GeneID" id="81688"/>
<dbReference type="KEGG" id="hsa:81688"/>
<dbReference type="MANE-Select" id="ENST00000378119.9">
    <property type="protein sequence ID" value="ENSP00000367359.4"/>
    <property type="RefSeq nucleotide sequence ID" value="NM_030939.5"/>
    <property type="RefSeq protein sequence ID" value="NP_112201.1"/>
</dbReference>
<dbReference type="UCSC" id="uc003nel.5">
    <molecule id="Q9GZU0-1"/>
    <property type="organism name" value="human"/>
</dbReference>
<dbReference type="AGR" id="HGNC:20998"/>
<dbReference type="CTD" id="81688"/>
<dbReference type="DisGeNET" id="81688"/>
<dbReference type="GeneCards" id="C6orf62"/>
<dbReference type="HGNC" id="HGNC:20998">
    <property type="gene designation" value="C6orf62"/>
</dbReference>
<dbReference type="HPA" id="ENSG00000112308">
    <property type="expression patterns" value="Low tissue specificity"/>
</dbReference>
<dbReference type="neXtProt" id="NX_Q9GZU0"/>
<dbReference type="OpenTargets" id="ENSG00000112308"/>
<dbReference type="PharmGKB" id="PA134946342"/>
<dbReference type="VEuPathDB" id="HostDB:ENSG00000112308"/>
<dbReference type="eggNOG" id="ENOG502QQ5Z">
    <property type="taxonomic scope" value="Eukaryota"/>
</dbReference>
<dbReference type="GeneTree" id="ENSGT00390000008115"/>
<dbReference type="HOGENOM" id="CLU_105473_0_0_1"/>
<dbReference type="InParanoid" id="Q9GZU0"/>
<dbReference type="OMA" id="SMFLFVD"/>
<dbReference type="OrthoDB" id="9860094at2759"/>
<dbReference type="PAN-GO" id="Q9GZU0">
    <property type="GO annotations" value="0 GO annotations based on evolutionary models"/>
</dbReference>
<dbReference type="PhylomeDB" id="Q9GZU0"/>
<dbReference type="TreeFam" id="TF329480"/>
<dbReference type="PathwayCommons" id="Q9GZU0"/>
<dbReference type="SignaLink" id="Q9GZU0"/>
<dbReference type="BioGRID-ORCS" id="81688">
    <property type="hits" value="21 hits in 1142 CRISPR screens"/>
</dbReference>
<dbReference type="ChiTaRS" id="C6orf62">
    <property type="organism name" value="human"/>
</dbReference>
<dbReference type="GenomeRNAi" id="81688"/>
<dbReference type="Pharos" id="Q9GZU0">
    <property type="development level" value="Tdark"/>
</dbReference>
<dbReference type="PRO" id="PR:Q9GZU0"/>
<dbReference type="Proteomes" id="UP000005640">
    <property type="component" value="Chromosome 6"/>
</dbReference>
<dbReference type="RNAct" id="Q9GZU0">
    <property type="molecule type" value="protein"/>
</dbReference>
<dbReference type="Bgee" id="ENSG00000112308">
    <property type="expression patterns" value="Expressed in pylorus and 209 other cell types or tissues"/>
</dbReference>
<dbReference type="ExpressionAtlas" id="Q9GZU0">
    <property type="expression patterns" value="baseline and differential"/>
</dbReference>
<dbReference type="InterPro" id="IPR027903">
    <property type="entry name" value="DUF4566"/>
</dbReference>
<dbReference type="PANTHER" id="PTHR28336">
    <property type="entry name" value="BA1-643"/>
    <property type="match status" value="1"/>
</dbReference>
<dbReference type="PANTHER" id="PTHR28336:SF1">
    <property type="entry name" value="SIMILAR TO CDNA SEQUENCE BC005537"/>
    <property type="match status" value="1"/>
</dbReference>
<dbReference type="Pfam" id="PF15130">
    <property type="entry name" value="DUF4566"/>
    <property type="match status" value="1"/>
</dbReference>
<organism>
    <name type="scientific">Homo sapiens</name>
    <name type="common">Human</name>
    <dbReference type="NCBI Taxonomy" id="9606"/>
    <lineage>
        <taxon>Eukaryota</taxon>
        <taxon>Metazoa</taxon>
        <taxon>Chordata</taxon>
        <taxon>Craniata</taxon>
        <taxon>Vertebrata</taxon>
        <taxon>Euteleostomi</taxon>
        <taxon>Mammalia</taxon>
        <taxon>Eutheria</taxon>
        <taxon>Euarchontoglires</taxon>
        <taxon>Primates</taxon>
        <taxon>Haplorrhini</taxon>
        <taxon>Catarrhini</taxon>
        <taxon>Hominidae</taxon>
        <taxon>Homo</taxon>
    </lineage>
</organism>
<sequence length="229" mass="27083">MGDPNSRKKQALNRLRAQLRKKKESLADQFDFKMYIAFVFKEKKKKSALFEVSEVIPVMTNNYEENILKGVRDSSYSLESSLELLQKDVVQLHAPRYQSMRRDVIGCTQEMDFILWPRNDIEKIVCLLFSRWKESDEPFRPVQAKFEFHHGDYEKQFLHVLSRKDKTGIVVNNPNQSVFLFIDRQHLQTPKNKATIFKLCSICLYLPQEQLTHWAVGTIEDHLRPYMPE</sequence>
<accession>Q9GZU0</accession>
<accession>Q3LIB6</accession>
<accession>Q5JVZ2</accession>
<accession>Q5JVZ3</accession>
<accession>Q6IA63</accession>
<accession>Q9H1Z2</accession>
<keyword id="KW-0025">Alternative splicing</keyword>
<keyword id="KW-1267">Proteomics identification</keyword>
<keyword id="KW-1185">Reference proteome</keyword>